<accession>Q86YC2</accession>
<accession>A6NIE1</accession>
<accession>Q8N7Y6</accession>
<accession>Q8ND31</accession>
<accession>Q9H6W1</accession>
<protein>
    <recommendedName>
        <fullName>Partner and localizer of BRCA2</fullName>
    </recommendedName>
</protein>
<evidence type="ECO:0000255" key="1"/>
<evidence type="ECO:0000256" key="2">
    <source>
        <dbReference type="SAM" id="MobiDB-lite"/>
    </source>
</evidence>
<evidence type="ECO:0000269" key="3">
    <source>
    </source>
</evidence>
<evidence type="ECO:0000269" key="4">
    <source>
    </source>
</evidence>
<evidence type="ECO:0000269" key="5">
    <source>
    </source>
</evidence>
<evidence type="ECO:0000269" key="6">
    <source>
    </source>
</evidence>
<evidence type="ECO:0000269" key="7">
    <source>
    </source>
</evidence>
<evidence type="ECO:0000269" key="8">
    <source>
    </source>
</evidence>
<evidence type="ECO:0000269" key="9">
    <source>
    </source>
</evidence>
<evidence type="ECO:0000269" key="10">
    <source>
    </source>
</evidence>
<evidence type="ECO:0000269" key="11">
    <source>
    </source>
</evidence>
<evidence type="ECO:0000269" key="12">
    <source>
    </source>
</evidence>
<evidence type="ECO:0000269" key="13">
    <source>
    </source>
</evidence>
<evidence type="ECO:0000269" key="14">
    <source>
    </source>
</evidence>
<evidence type="ECO:0000269" key="15">
    <source>
    </source>
</evidence>
<evidence type="ECO:0000269" key="16">
    <source>
    </source>
</evidence>
<evidence type="ECO:0000269" key="17">
    <source>
    </source>
</evidence>
<evidence type="ECO:0000269" key="18">
    <source>
    </source>
</evidence>
<evidence type="ECO:0000269" key="19">
    <source>
    </source>
</evidence>
<evidence type="ECO:0000269" key="20">
    <source>
    </source>
</evidence>
<evidence type="ECO:0000269" key="21">
    <source>
    </source>
</evidence>
<evidence type="ECO:0000269" key="22">
    <source>
    </source>
</evidence>
<evidence type="ECO:0000269" key="23">
    <source>
    </source>
</evidence>
<evidence type="ECO:0000269" key="24">
    <source>
    </source>
</evidence>
<evidence type="ECO:0000269" key="25">
    <source>
    </source>
</evidence>
<evidence type="ECO:0000269" key="26">
    <source>
    </source>
</evidence>
<evidence type="ECO:0000269" key="27">
    <source>
    </source>
</evidence>
<evidence type="ECO:0000305" key="28"/>
<evidence type="ECO:0007744" key="29">
    <source>
    </source>
</evidence>
<evidence type="ECO:0007744" key="30">
    <source>
    </source>
</evidence>
<evidence type="ECO:0007744" key="31">
    <source>
    </source>
</evidence>
<evidence type="ECO:0007744" key="32">
    <source>
    </source>
</evidence>
<evidence type="ECO:0007829" key="33">
    <source>
        <dbReference type="PDB" id="2W18"/>
    </source>
</evidence>
<evidence type="ECO:0007829" key="34">
    <source>
        <dbReference type="PDB" id="3EU7"/>
    </source>
</evidence>
<evidence type="ECO:0007829" key="35">
    <source>
        <dbReference type="PDB" id="7S4A"/>
    </source>
</evidence>
<organism>
    <name type="scientific">Homo sapiens</name>
    <name type="common">Human</name>
    <dbReference type="NCBI Taxonomy" id="9606"/>
    <lineage>
        <taxon>Eukaryota</taxon>
        <taxon>Metazoa</taxon>
        <taxon>Chordata</taxon>
        <taxon>Craniata</taxon>
        <taxon>Vertebrata</taxon>
        <taxon>Euteleostomi</taxon>
        <taxon>Mammalia</taxon>
        <taxon>Eutheria</taxon>
        <taxon>Euarchontoglires</taxon>
        <taxon>Primates</taxon>
        <taxon>Haplorrhini</taxon>
        <taxon>Catarrhini</taxon>
        <taxon>Hominidae</taxon>
        <taxon>Homo</taxon>
    </lineage>
</organism>
<dbReference type="EMBL" id="AL834425">
    <property type="protein sequence ID" value="CAD39086.1"/>
    <property type="molecule type" value="mRNA"/>
</dbReference>
<dbReference type="EMBL" id="CR749637">
    <property type="protein sequence ID" value="CAH18431.1"/>
    <property type="molecule type" value="mRNA"/>
</dbReference>
<dbReference type="EMBL" id="AC008870">
    <property type="status" value="NOT_ANNOTATED_CDS"/>
    <property type="molecule type" value="Genomic_DNA"/>
</dbReference>
<dbReference type="EMBL" id="CH471145">
    <property type="protein sequence ID" value="EAW55813.1"/>
    <property type="molecule type" value="Genomic_DNA"/>
</dbReference>
<dbReference type="EMBL" id="BC044254">
    <property type="protein sequence ID" value="AAH44254.1"/>
    <property type="molecule type" value="mRNA"/>
</dbReference>
<dbReference type="EMBL" id="AK025469">
    <property type="protein sequence ID" value="BAB15140.1"/>
    <property type="status" value="ALT_INIT"/>
    <property type="molecule type" value="mRNA"/>
</dbReference>
<dbReference type="EMBL" id="AK097533">
    <property type="protein sequence ID" value="BAC05090.1"/>
    <property type="molecule type" value="mRNA"/>
</dbReference>
<dbReference type="CCDS" id="CCDS32406.1"/>
<dbReference type="RefSeq" id="NP_078951.2">
    <property type="nucleotide sequence ID" value="NM_024675.3"/>
</dbReference>
<dbReference type="PDB" id="2W18">
    <property type="method" value="X-ray"/>
    <property type="resolution" value="1.90 A"/>
    <property type="chains" value="A=835-1186"/>
</dbReference>
<dbReference type="PDB" id="3EU7">
    <property type="method" value="X-ray"/>
    <property type="resolution" value="2.20 A"/>
    <property type="chains" value="A=835-1186"/>
</dbReference>
<dbReference type="PDB" id="7S4A">
    <property type="method" value="X-ray"/>
    <property type="resolution" value="2.69 A"/>
    <property type="chains" value="B/D=597-630"/>
</dbReference>
<dbReference type="PDB" id="8YAP">
    <property type="method" value="NMR"/>
    <property type="chains" value="A/B=6-41"/>
</dbReference>
<dbReference type="PDBsum" id="2W18"/>
<dbReference type="PDBsum" id="3EU7"/>
<dbReference type="PDBsum" id="7S4A"/>
<dbReference type="PDBsum" id="8YAP"/>
<dbReference type="SASBDB" id="Q86YC2"/>
<dbReference type="SMR" id="Q86YC2"/>
<dbReference type="BioGRID" id="122843">
    <property type="interactions" value="85"/>
</dbReference>
<dbReference type="ComplexPortal" id="CPX-845">
    <property type="entry name" value="BRCA1-PALB2-BRCA2 homologous recombination DNA repair complex"/>
</dbReference>
<dbReference type="CORUM" id="Q86YC2"/>
<dbReference type="DIP" id="DIP-38427N"/>
<dbReference type="ELM" id="Q86YC2"/>
<dbReference type="FunCoup" id="Q86YC2">
    <property type="interactions" value="2387"/>
</dbReference>
<dbReference type="IntAct" id="Q86YC2">
    <property type="interactions" value="47"/>
</dbReference>
<dbReference type="MINT" id="Q86YC2"/>
<dbReference type="STRING" id="9606.ENSP00000261584"/>
<dbReference type="GlyCosmos" id="Q86YC2">
    <property type="glycosylation" value="1 site, 1 glycan"/>
</dbReference>
<dbReference type="GlyGen" id="Q86YC2">
    <property type="glycosylation" value="2 sites, 1 O-linked glycan (1 site)"/>
</dbReference>
<dbReference type="iPTMnet" id="Q86YC2"/>
<dbReference type="PhosphoSitePlus" id="Q86YC2"/>
<dbReference type="BioMuta" id="PALB2"/>
<dbReference type="DMDM" id="74727919"/>
<dbReference type="CPTAC" id="CPTAC-3284"/>
<dbReference type="jPOST" id="Q86YC2"/>
<dbReference type="MassIVE" id="Q86YC2"/>
<dbReference type="PaxDb" id="9606-ENSP00000261584"/>
<dbReference type="PeptideAtlas" id="Q86YC2"/>
<dbReference type="ProteomicsDB" id="70395"/>
<dbReference type="Antibodypedia" id="26008">
    <property type="antibodies" value="248 antibodies from 36 providers"/>
</dbReference>
<dbReference type="CPTC" id="Q86YC2">
    <property type="antibodies" value="1 antibody"/>
</dbReference>
<dbReference type="DNASU" id="79728"/>
<dbReference type="Ensembl" id="ENST00000261584.9">
    <property type="protein sequence ID" value="ENSP00000261584.4"/>
    <property type="gene ID" value="ENSG00000083093.12"/>
</dbReference>
<dbReference type="GeneID" id="79728"/>
<dbReference type="KEGG" id="hsa:79728"/>
<dbReference type="MANE-Select" id="ENST00000261584.9">
    <property type="protein sequence ID" value="ENSP00000261584.4"/>
    <property type="RefSeq nucleotide sequence ID" value="NM_024675.4"/>
    <property type="RefSeq protein sequence ID" value="NP_078951.2"/>
</dbReference>
<dbReference type="UCSC" id="uc002dlx.2">
    <property type="organism name" value="human"/>
</dbReference>
<dbReference type="AGR" id="HGNC:26144"/>
<dbReference type="CTD" id="79728"/>
<dbReference type="DisGeNET" id="79728"/>
<dbReference type="GeneCards" id="PALB2"/>
<dbReference type="GeneReviews" id="PALB2"/>
<dbReference type="HGNC" id="HGNC:26144">
    <property type="gene designation" value="PALB2"/>
</dbReference>
<dbReference type="HPA" id="ENSG00000083093">
    <property type="expression patterns" value="Low tissue specificity"/>
</dbReference>
<dbReference type="MalaCards" id="PALB2"/>
<dbReference type="MIM" id="114480">
    <property type="type" value="phenotype"/>
</dbReference>
<dbReference type="MIM" id="610355">
    <property type="type" value="gene"/>
</dbReference>
<dbReference type="MIM" id="610832">
    <property type="type" value="phenotype"/>
</dbReference>
<dbReference type="MIM" id="613348">
    <property type="type" value="phenotype"/>
</dbReference>
<dbReference type="MIM" id="620442">
    <property type="type" value="phenotype"/>
</dbReference>
<dbReference type="neXtProt" id="NX_Q86YC2"/>
<dbReference type="OpenTargets" id="ENSG00000083093"/>
<dbReference type="Orphanet" id="178">
    <property type="disease" value="Chordoma"/>
</dbReference>
<dbReference type="Orphanet" id="1333">
    <property type="disease" value="Familial pancreatic carcinoma"/>
</dbReference>
<dbReference type="Orphanet" id="84">
    <property type="disease" value="Fanconi anemia"/>
</dbReference>
<dbReference type="Orphanet" id="145">
    <property type="disease" value="Hereditary breast and/or ovarian cancer syndrome"/>
</dbReference>
<dbReference type="Orphanet" id="227535">
    <property type="disease" value="Hereditary breast cancer"/>
</dbReference>
<dbReference type="PharmGKB" id="PA162398608"/>
<dbReference type="VEuPathDB" id="HostDB:ENSG00000083093"/>
<dbReference type="eggNOG" id="ENOG502QRAP">
    <property type="taxonomic scope" value="Eukaryota"/>
</dbReference>
<dbReference type="GeneTree" id="ENSGT00390000014423"/>
<dbReference type="HOGENOM" id="CLU_008217_0_0_1"/>
<dbReference type="InParanoid" id="Q86YC2"/>
<dbReference type="OMA" id="GHCQKED"/>
<dbReference type="OrthoDB" id="9936560at2759"/>
<dbReference type="PAN-GO" id="Q86YC2">
    <property type="GO annotations" value="3 GO annotations based on evolutionary models"/>
</dbReference>
<dbReference type="PhylomeDB" id="Q86YC2"/>
<dbReference type="TreeFam" id="TF351544"/>
<dbReference type="PathwayCommons" id="Q86YC2"/>
<dbReference type="Reactome" id="R-HSA-5685942">
    <property type="pathway name" value="HDR through Homologous Recombination (HRR)"/>
</dbReference>
<dbReference type="Reactome" id="R-HSA-5693554">
    <property type="pathway name" value="Resolution of D-loop Structures through Synthesis-Dependent Strand Annealing (SDSA)"/>
</dbReference>
<dbReference type="Reactome" id="R-HSA-5693568">
    <property type="pathway name" value="Resolution of D-loop Structures through Holliday Junction Intermediates"/>
</dbReference>
<dbReference type="Reactome" id="R-HSA-5693579">
    <property type="pathway name" value="Homologous DNA Pairing and Strand Exchange"/>
</dbReference>
<dbReference type="Reactome" id="R-HSA-8951664">
    <property type="pathway name" value="Neddylation"/>
</dbReference>
<dbReference type="Reactome" id="R-HSA-9701192">
    <property type="pathway name" value="Defective homologous recombination repair (HRR) due to BRCA1 loss of function"/>
</dbReference>
<dbReference type="Reactome" id="R-HSA-9704331">
    <property type="pathway name" value="Defective HDR through Homologous Recombination Repair (HRR) due to PALB2 loss of BRCA1 binding function"/>
</dbReference>
<dbReference type="Reactome" id="R-HSA-9704646">
    <property type="pathway name" value="Defective HDR through Homologous Recombination Repair (HRR) due to PALB2 loss of BRCA2/RAD51/RAD51C binding function"/>
</dbReference>
<dbReference type="Reactome" id="R-HSA-9709603">
    <property type="pathway name" value="Impaired BRCA2 binding to PALB2"/>
</dbReference>
<dbReference type="Reactome" id="R-HSA-9755511">
    <property type="pathway name" value="KEAP1-NFE2L2 pathway"/>
</dbReference>
<dbReference type="SignaLink" id="Q86YC2"/>
<dbReference type="SIGNOR" id="Q86YC2"/>
<dbReference type="BioGRID-ORCS" id="79728">
    <property type="hits" value="229 hits in 1168 CRISPR screens"/>
</dbReference>
<dbReference type="ChiTaRS" id="PALB2">
    <property type="organism name" value="human"/>
</dbReference>
<dbReference type="EvolutionaryTrace" id="Q86YC2"/>
<dbReference type="GeneWiki" id="PALB2"/>
<dbReference type="GenomeRNAi" id="79728"/>
<dbReference type="Pharos" id="Q86YC2">
    <property type="development level" value="Tbio"/>
</dbReference>
<dbReference type="PRO" id="PR:Q86YC2"/>
<dbReference type="Proteomes" id="UP000005640">
    <property type="component" value="Chromosome 16"/>
</dbReference>
<dbReference type="RNAct" id="Q86YC2">
    <property type="molecule type" value="protein"/>
</dbReference>
<dbReference type="Bgee" id="ENSG00000083093">
    <property type="expression patterns" value="Expressed in secondary oocyte and 147 other cell types or tissues"/>
</dbReference>
<dbReference type="ExpressionAtlas" id="Q86YC2">
    <property type="expression patterns" value="baseline and differential"/>
</dbReference>
<dbReference type="GO" id="GO:1990391">
    <property type="term" value="C:DNA repair complex"/>
    <property type="evidence" value="ECO:0000353"/>
    <property type="project" value="ComplexPortal"/>
</dbReference>
<dbReference type="GO" id="GO:0016607">
    <property type="term" value="C:nuclear speck"/>
    <property type="evidence" value="ECO:0000314"/>
    <property type="project" value="HPA"/>
</dbReference>
<dbReference type="GO" id="GO:0005654">
    <property type="term" value="C:nucleoplasm"/>
    <property type="evidence" value="ECO:0000314"/>
    <property type="project" value="HPA"/>
</dbReference>
<dbReference type="GO" id="GO:0005634">
    <property type="term" value="C:nucleus"/>
    <property type="evidence" value="ECO:0000303"/>
    <property type="project" value="ComplexPortal"/>
</dbReference>
<dbReference type="GO" id="GO:0032991">
    <property type="term" value="C:protein-containing complex"/>
    <property type="evidence" value="ECO:0000314"/>
    <property type="project" value="UniProtKB"/>
</dbReference>
<dbReference type="GO" id="GO:0003677">
    <property type="term" value="F:DNA binding"/>
    <property type="evidence" value="ECO:0000314"/>
    <property type="project" value="UniProtKB"/>
</dbReference>
<dbReference type="GO" id="GO:0009887">
    <property type="term" value="P:animal organ morphogenesis"/>
    <property type="evidence" value="ECO:0007669"/>
    <property type="project" value="Ensembl"/>
</dbReference>
<dbReference type="GO" id="GO:0006915">
    <property type="term" value="P:apoptotic process"/>
    <property type="evidence" value="ECO:0007669"/>
    <property type="project" value="Ensembl"/>
</dbReference>
<dbReference type="GO" id="GO:0000724">
    <property type="term" value="P:double-strand break repair via homologous recombination"/>
    <property type="evidence" value="ECO:0000314"/>
    <property type="project" value="UniProtKB"/>
</dbReference>
<dbReference type="GO" id="GO:0048568">
    <property type="term" value="P:embryonic organ development"/>
    <property type="evidence" value="ECO:0007669"/>
    <property type="project" value="Ensembl"/>
</dbReference>
<dbReference type="GO" id="GO:0001833">
    <property type="term" value="P:inner cell mass cell proliferation"/>
    <property type="evidence" value="ECO:0007669"/>
    <property type="project" value="Ensembl"/>
</dbReference>
<dbReference type="GO" id="GO:0007498">
    <property type="term" value="P:mesoderm development"/>
    <property type="evidence" value="ECO:0007669"/>
    <property type="project" value="Ensembl"/>
</dbReference>
<dbReference type="GO" id="GO:0035264">
    <property type="term" value="P:multicellular organism growth"/>
    <property type="evidence" value="ECO:0007669"/>
    <property type="project" value="Ensembl"/>
</dbReference>
<dbReference type="GO" id="GO:0043066">
    <property type="term" value="P:negative regulation of apoptotic process"/>
    <property type="evidence" value="ECO:0007669"/>
    <property type="project" value="Ensembl"/>
</dbReference>
<dbReference type="GO" id="GO:0036342">
    <property type="term" value="P:post-anal tail morphogenesis"/>
    <property type="evidence" value="ECO:0007669"/>
    <property type="project" value="Ensembl"/>
</dbReference>
<dbReference type="GO" id="GO:0001756">
    <property type="term" value="P:somitogenesis"/>
    <property type="evidence" value="ECO:0007669"/>
    <property type="project" value="Ensembl"/>
</dbReference>
<dbReference type="FunFam" id="2.130.10.10:FF:000539">
    <property type="entry name" value="Partner and localizer of BRCA2"/>
    <property type="match status" value="1"/>
</dbReference>
<dbReference type="Gene3D" id="2.130.10.10">
    <property type="entry name" value="YVTN repeat-like/Quinoprotein amine dehydrogenase"/>
    <property type="match status" value="1"/>
</dbReference>
<dbReference type="IDEAL" id="IID00249"/>
<dbReference type="InterPro" id="IPR042417">
    <property type="entry name" value="PALB2"/>
</dbReference>
<dbReference type="InterPro" id="IPR031920">
    <property type="entry name" value="PALB2_WD40"/>
</dbReference>
<dbReference type="InterPro" id="IPR015943">
    <property type="entry name" value="WD40/YVTN_repeat-like_dom_sf"/>
</dbReference>
<dbReference type="InterPro" id="IPR036322">
    <property type="entry name" value="WD40_repeat_dom_sf"/>
</dbReference>
<dbReference type="PANTHER" id="PTHR14662">
    <property type="entry name" value="PARTNER AND LOCALIZER OF BRCA2"/>
    <property type="match status" value="1"/>
</dbReference>
<dbReference type="PANTHER" id="PTHR14662:SF2">
    <property type="entry name" value="PARTNER AND LOCALIZER OF BRCA2"/>
    <property type="match status" value="1"/>
</dbReference>
<dbReference type="Pfam" id="PF16756">
    <property type="entry name" value="PALB2_WD40"/>
    <property type="match status" value="1"/>
</dbReference>
<dbReference type="SUPFAM" id="SSF50978">
    <property type="entry name" value="WD40 repeat-like"/>
    <property type="match status" value="1"/>
</dbReference>
<proteinExistence type="evidence at protein level"/>
<sequence length="1186" mass="131295">MDEPPGKPLSCEEKEKLKEKLAFLKREYSKTLARLQRAQRAEKIKHSIKKTVEEQDCLSQQDLSPQLKHSEPKNKICVYDKLHIKTHLDEETGEKTSITLDVGPESFNPGDGPGGLPIQRTDDTQEHFPHRVSDPSGEQKQKLPSRRKKQQKRTFISQERDCVFGTDSLRLSGKRLKEQEEISSKNPARSPVTEIRTHLLSLKSELPDSPEPVTEINEDSVLIPPTAQPEKGVDTFLRRPNFTRATTVPLQTLSDSGSSQHLEHIPPKGSSELTTHDLKNIRFTSPVSLEAQGKKMTVSTDNLLVNKAISKSGQLPTSSNLEANISCSLNELTYNNLPANENQNLKEQNQTEKSLKSPSDTLDGRNENLQESEILSQPKSLSLEATSPLSAEKHSCTVPEGLLFPAEYYVRTTRSMSNCQRKVAVEAVIQSHLDVKKKGFKNKNKDASKNLNLSNEETDQSEIRMSGTCTGQPSSRTSQKLLSLTKVSSPAGPTEDNDLSRKAVAQAPGRRYTGKRKSACTPASDHCEPLLPTSSLSIVNRSKEEVTSHKYQHEKLFIQVKGKKSRHQKEDSLSWSNSAYLSLDDDAFTAPFHRDGMLSLKQLLSFLSITDFQLPDEDFGPLKLEKVKSCSEKPVEPFESKMFGERHLKEGSCIFPEELSPKRMDTEMEDLEEDLIVLPGKSHPKRPNSQSQHTKTGLSSSILLYTPLNTVAPDDNDRPTTDMCSPAFPILGTTPAFGPQGSYEKASTEVAGRTCCTPQLAHLKDSVCLASDTKQFDSSGSPAKPHTTLQVSGRQGQPTCDCDSVPPGTPPPIESFTFKENQLCRNTCQELHKHSVEQTETAELPASDSINPGNLQLVSELKNPSGSCSVDVSAMFWERAGCKEPCIITACEDVVSLWKALDAWQWEKLYTWHFAEVPVLQIVPVPDVYNLVCVALGNLEIREIRALFCSSDDESEKQVLLKSGNIKAVLGLTKRRLVSSSGTLSDQQVEVMTFAEDGGGKENQFLMPPEETILTFAEVQGMQEALLGTTIMNNIVIWNLKTGQLLKKMHIDDSYQASVCHKAYSEMGLLFIVLSHPCAKESESLRSPVFQLIVINPKTTLSVGVMLYCLPPGQAGRFLEGDVKDHCAAAILTSGTIAIWDLLLGQCTALLPPVSDQHWSFVKWSGTDSHLLAGQKDGNIFVYHYS</sequence>
<gene>
    <name type="primary">PALB2</name>
    <name type="synonym">FANCN</name>
</gene>
<comment type="function">
    <text evidence="3 11 12 15 16 20 22 23 26">Plays a critical role in homologous recombination repair (HRR) through its ability to recruit BRCA2 and RAD51 to DNA breaks (PubMed:16793542, PubMed:19369211, PubMed:19423707, PubMed:22941656, PubMed:24141787, PubMed:28319063). Strongly stimulates the DNA strand-invasion activity of RAD51, stabilizes the nucleoprotein filament against a disruptive BRC3-BRC4 polypeptide and helps RAD51 to overcome the suppressive effect of replication protein A (RPA) (PubMed:20871615). Functionally cooperates with RAD51AP1 in promoting of D-loop formation by RAD51 (PubMed:20871616). Serves as the molecular scaffold in the formation of the BRCA1-PALB2-BRCA2 complex which is essential for homologous recombination (PubMed:19369211). Via its WD repeats is proposed to scaffold a HR complex containing RAD51C and BRCA2 which is thought to play a role in HR-mediated DNA repair (PubMed:24141787). Essential partner of BRCA2 that promotes the localization and stability of BRCA2 (PubMed:16793542). Also enables its recombinational repair and checkpoint functions of BRCA2 (PubMed:16793542). May act by promoting stable association of BRCA2 with nuclear structures, allowing BRCA2 to escape the effects of proteasome-mediated degradation (PubMed:16793542). Binds DNA with high affinity for D loop, which comprises single-stranded, double-stranded and branched DNA structures (PubMed:20871616). May play a role in the extension step after strand invasion at replication-dependent DNA double-strand breaks; together with BRCA2 is involved in both POLH localization at collapsed replication forks and DNA polymerization activity (PubMed:24485656).</text>
</comment>
<comment type="subunit">
    <text evidence="3 11 12 13 14 15 16 22 23 25 26">Homooligomer; dissociated upon DNA damage thus allowing association with BRCA1 (PubMed:19423707, PubMed:28319063). Oligomerization is essential for its focal accumulation at DNA breaks (PubMed:19423707). Part of a BRCA complex containing BRCA1, BRCA2 and PALB2 (PubMed:19369211). Interacts with BRCA1 and this interaction is essential for its function in HRR (PubMed:19369211, PubMed:28319063). Interacts with RAD51AP1 and MORF4L1/MRG15 (PubMed:20332121, PubMed:20871616). Component of the homologous recombination repair (HR) complex composed of ERCC5/XPG, BRCA2, PALB2, DSS1 and RAD51 (PubMed:26833090). Within the complex, interacts with ERCC5/XPG and BRCA2 (PubMed:26833090). Interacts with BRCA2, RAD51C, RAD51 and XRCC3; the interactions are direct and it may serve as a scaffold for a HR complex containing PALB2, BRCA2, RAD51C, RAD51 and XRCC3 (PubMed:16793542, PubMed:19423707, PubMed:19609323, PubMed:20871615, PubMed:20871616, PubMed:24141787, PubMed:28319063). Interacts with POLH; the interaction is direct (PubMed:24485656).</text>
</comment>
<comment type="interaction">
    <interactant intactId="EBI-1222653">
        <id>Q86YC2</id>
    </interactant>
    <interactant intactId="EBI-349905">
        <id>P38398</id>
        <label>BRCA1</label>
    </interactant>
    <organismsDiffer>false</organismsDiffer>
    <experiments>27</experiments>
</comment>
<comment type="interaction">
    <interactant intactId="EBI-1222653">
        <id>Q86YC2</id>
    </interactant>
    <interactant intactId="EBI-79792">
        <id>P51587</id>
        <label>BRCA2</label>
    </interactant>
    <organismsDiffer>false</organismsDiffer>
    <experiments>30</experiments>
</comment>
<comment type="interaction">
    <interactant intactId="EBI-1222653">
        <id>Q86YC2</id>
    </interactant>
    <interactant intactId="EBI-751001">
        <id>Q14145</id>
        <label>KEAP1</label>
    </interactant>
    <organismsDiffer>false</organismsDiffer>
    <experiments>6</experiments>
</comment>
<comment type="interaction">
    <interactant intactId="EBI-1222653">
        <id>Q86YC2</id>
    </interactant>
    <interactant intactId="EBI-10288852">
        <id>Q9UBU8-2</id>
        <label>MORF4L1</label>
    </interactant>
    <organismsDiffer>false</organismsDiffer>
    <experiments>3</experiments>
</comment>
<comment type="interaction">
    <interactant intactId="EBI-1222653">
        <id>Q86YC2</id>
    </interactant>
    <interactant intactId="EBI-2827270">
        <id>Q9Y253</id>
        <label>POLH</label>
    </interactant>
    <organismsDiffer>false</organismsDiffer>
    <experiments>7</experiments>
</comment>
<comment type="interaction">
    <interactant intactId="EBI-1222653">
        <id>Q86YC2</id>
    </interactant>
    <interactant intactId="EBI-297202">
        <id>Q06609</id>
        <label>RAD51</label>
    </interactant>
    <organismsDiffer>false</organismsDiffer>
    <experiments>9</experiments>
</comment>
<comment type="interaction">
    <interactant intactId="EBI-1222653">
        <id>Q86YC2</id>
    </interactant>
    <interactant intactId="EBI-1178743">
        <id>Q96B01-2</id>
        <label>RAD51AP1</label>
    </interactant>
    <organismsDiffer>false</organismsDiffer>
    <experiments>2</experiments>
</comment>
<comment type="interaction">
    <interactant intactId="EBI-1222653">
        <id>Q86YC2</id>
    </interactant>
    <interactant intactId="EBI-2267048">
        <id>O43502</id>
        <label>RAD51C</label>
    </interactant>
    <organismsDiffer>false</organismsDiffer>
    <experiments>10</experiments>
</comment>
<comment type="interaction">
    <interactant intactId="EBI-1222653">
        <id>Q86YC2</id>
    </interactant>
    <interactant intactId="EBI-306876">
        <id>P51784</id>
        <label>USP11</label>
    </interactant>
    <organismsDiffer>false</organismsDiffer>
    <experiments>2</experiments>
</comment>
<comment type="interaction">
    <interactant intactId="EBI-1222653">
        <id>Q86YC2</id>
    </interactant>
    <interactant intactId="EBI-2849976">
        <id>O43542</id>
        <label>XRCC3</label>
    </interactant>
    <organismsDiffer>false</organismsDiffer>
    <experiments>3</experiments>
</comment>
<comment type="subcellular location">
    <subcellularLocation>
        <location evidence="3 25 26">Nucleus</location>
    </subcellularLocation>
    <text evidence="3 26">Colocalizes with BRCA2 and BRCA1 in nuclear foci.</text>
</comment>
<comment type="domain">
    <text evidence="13">Interaction with BRCA2 occurs through a hydrophobic pocket at the crossover between WD repeats 4 and 5.</text>
</comment>
<comment type="domain">
    <text evidence="13 20">The coiled coil domain mediates self-association.</text>
</comment>
<comment type="domain">
    <text evidence="13 18">The chromatin-association motif (ChAM) mediates association with chromatin, probably through nucleosome core particles, independently from binding to D loop, ssDNA or dsDNA structures.</text>
</comment>
<comment type="disease" evidence="7 19 26">
    <disease id="DI-02602">
        <name>Breast cancer</name>
        <acronym>BC</acronym>
        <description>A common malignancy originating from breast epithelial tissue. Breast neoplasms can be distinguished by their histologic pattern. Invasive ductal carcinoma is by far the most common type. Breast cancer is etiologically and genetically heterogeneous. Important genetic factors have been indicated by familial occurrence and bilateral involvement. Mutations at more than one locus can be involved in different families or even in the same case.</description>
        <dbReference type="MIM" id="114480"/>
    </disease>
    <text evidence="19">Disease susceptibility is associated with variants affecting the gene represented in this entry. Breast cancer susceptibility is strongly associated with PALB2 truncating mutations. Conversely, rare missense mutations do not strongly influence breast cancer risk (PubMed:22241545).</text>
</comment>
<comment type="disease" evidence="5 6">
    <disease id="DI-01604">
        <name>Fanconi anemia complementation group N</name>
        <acronym>FANCN</acronym>
        <description>A disorder affecting all bone marrow elements and resulting in anemia, leukopenia and thrombopenia. It is associated with cardiac, renal and limb malformations, dermal pigmentary changes, and a predisposition to the development of malignancies. At the cellular level it is associated with hypersensitivity to DNA-damaging agents, chromosomal instability (increased chromosome breakage) and defective DNA repair.</description>
        <dbReference type="MIM" id="610832"/>
    </disease>
    <text>The disease is caused by variants affecting the gene represented in this entry.</text>
</comment>
<comment type="disease" evidence="10">
    <disease id="DI-02848">
        <name>Pancreatic cancer 3</name>
        <acronym>PNCA3</acronym>
        <description>A malignant neoplasm of the pancreas. Tumors can arise from both the exocrine and endocrine portions of the pancreas, but 95% of them develop from the exocrine portion, including the ductal epithelium, acinar cells, connective tissue, and lymphatic tissue.</description>
        <dbReference type="MIM" id="613348"/>
    </disease>
    <text>Disease susceptibility is associated with variants affecting the gene represented in this entry.</text>
</comment>
<comment type="disease" evidence="4 8 21 24 27">
    <disease id="DI-06717">
        <name>Breast-ovarian cancer, familial, 5</name>
        <acronym>BROVCA5</acronym>
        <description>A condition associated with familial predisposition to cancer of the breast and ovaries. Characteristic features in affected families are an early age of onset of breast cancer (often before age 50), increased chance of bilateral cancers (cancer that develop in both breasts, or both ovaries, independently), frequent occurrence of breast cancer among men, increased incidence of tumors of other specific organs, such as the prostate.</description>
        <dbReference type="MIM" id="620442"/>
    </disease>
    <text>Disease susceptibility is associated with variants affecting the gene represented in this entry.</text>
</comment>
<comment type="sequence caution" evidence="28">
    <conflict type="erroneous initiation">
        <sequence resource="EMBL-CDS" id="BAB15140"/>
    </conflict>
    <text>Truncated N-terminus.</text>
</comment>
<name>PALB2_HUMAN</name>
<keyword id="KW-0002">3D-structure</keyword>
<keyword id="KW-0175">Coiled coil</keyword>
<keyword id="KW-0225">Disease variant</keyword>
<keyword id="KW-0227">DNA damage</keyword>
<keyword id="KW-0233">DNA recombination</keyword>
<keyword id="KW-0234">DNA repair</keyword>
<keyword id="KW-0238">DNA-binding</keyword>
<keyword id="KW-0923">Fanconi anemia</keyword>
<keyword id="KW-0539">Nucleus</keyword>
<keyword id="KW-0597">Phosphoprotein</keyword>
<keyword id="KW-1267">Proteomics identification</keyword>
<keyword id="KW-1185">Reference proteome</keyword>
<keyword id="KW-0677">Repeat</keyword>
<keyword id="KW-0043">Tumor suppressor</keyword>
<keyword id="KW-0853">WD repeat</keyword>
<feature type="chain" id="PRO_0000252391" description="Partner and localizer of BRCA2">
    <location>
        <begin position="1"/>
        <end position="1186"/>
    </location>
</feature>
<feature type="repeat" description="WD 1">
    <location>
        <begin position="854"/>
        <end position="915"/>
    </location>
</feature>
<feature type="repeat" description="WD 2">
    <location>
        <begin position="917"/>
        <end position="961"/>
    </location>
</feature>
<feature type="repeat" description="WD 3">
    <location>
        <begin position="962"/>
        <end position="1009"/>
    </location>
</feature>
<feature type="repeat" description="WD 4">
    <location>
        <begin position="1010"/>
        <end position="1052"/>
    </location>
</feature>
<feature type="repeat" description="WD 5">
    <location>
        <begin position="1058"/>
        <end position="1109"/>
    </location>
</feature>
<feature type="repeat" description="WD 6">
    <location>
        <begin position="1115"/>
        <end position="1153"/>
    </location>
</feature>
<feature type="repeat" description="WD 7">
    <location>
        <begin position="1155"/>
        <end position="1186"/>
    </location>
</feature>
<feature type="region of interest" description="DNA-binding (with the preference D loop &gt; dsDNA &gt; ssDNA)">
    <location>
        <begin position="1"/>
        <end position="579"/>
    </location>
</feature>
<feature type="region of interest" description="Interaction with BRCA1" evidence="11">
    <location>
        <begin position="1"/>
        <end position="319"/>
    </location>
</feature>
<feature type="region of interest" description="Interaction with RAD51">
    <location>
        <begin position="1"/>
        <end position="200"/>
    </location>
</feature>
<feature type="region of interest" description="Required for its oligomerization and is important for its focal concentration at DNA damage sites">
    <location>
        <begin position="1"/>
        <end position="160"/>
    </location>
</feature>
<feature type="region of interest" description="Disordered" evidence="2">
    <location>
        <begin position="52"/>
        <end position="72"/>
    </location>
</feature>
<feature type="region of interest" description="Disordered" evidence="2">
    <location>
        <begin position="95"/>
        <end position="157"/>
    </location>
</feature>
<feature type="region of interest" description="Disordered" evidence="2">
    <location>
        <begin position="252"/>
        <end position="273"/>
    </location>
</feature>
<feature type="region of interest" description="Disordered" evidence="2">
    <location>
        <begin position="346"/>
        <end position="365"/>
    </location>
</feature>
<feature type="region of interest" description="ChAM (Chromatin-association motif); required for chromatin association, mediates nucleosome association">
    <location>
        <begin position="395"/>
        <end position="446"/>
    </location>
</feature>
<feature type="region of interest" description="Disordered" evidence="2">
    <location>
        <begin position="440"/>
        <end position="525"/>
    </location>
</feature>
<feature type="region of interest" description="Disordered" evidence="2">
    <location>
        <begin position="679"/>
        <end position="698"/>
    </location>
</feature>
<feature type="region of interest" description="Disordered" evidence="2">
    <location>
        <begin position="774"/>
        <end position="798"/>
    </location>
</feature>
<feature type="region of interest" description="Required for interaction with POLH and POLH DNA synthesis stimulation" evidence="23">
    <location>
        <begin position="775"/>
        <end position="1186"/>
    </location>
</feature>
<feature type="region of interest" description="Interaction with RAD51, BRCA2 and POLH" evidence="23">
    <location>
        <begin position="853"/>
        <end position="1186"/>
    </location>
</feature>
<feature type="coiled-coil region" evidence="1">
    <location>
        <begin position="9"/>
        <end position="41"/>
    </location>
</feature>
<feature type="compositionally biased region" description="Basic and acidic residues" evidence="2">
    <location>
        <begin position="120"/>
        <end position="141"/>
    </location>
</feature>
<feature type="compositionally biased region" description="Basic residues" evidence="2">
    <location>
        <begin position="143"/>
        <end position="152"/>
    </location>
</feature>
<feature type="compositionally biased region" description="Polar residues" evidence="2">
    <location>
        <begin position="467"/>
        <end position="488"/>
    </location>
</feature>
<feature type="compositionally biased region" description="Polar residues" evidence="2">
    <location>
        <begin position="687"/>
        <end position="698"/>
    </location>
</feature>
<feature type="modified residue" description="Phosphoserine" evidence="32">
    <location>
        <position position="172"/>
    </location>
</feature>
<feature type="modified residue" description="Phosphoserine" evidence="32">
    <location>
        <position position="190"/>
    </location>
</feature>
<feature type="modified residue" description="Phosphoserine" evidence="32">
    <location>
        <position position="285"/>
    </location>
</feature>
<feature type="modified residue" description="Phosphoserine" evidence="29 31 32">
    <location>
        <position position="376"/>
    </location>
</feature>
<feature type="modified residue" description="Phosphoserine" evidence="30 32">
    <location>
        <position position="387"/>
    </location>
</feature>
<feature type="modified residue" description="Phosphoserine" evidence="32">
    <location>
        <position position="454"/>
    </location>
</feature>
<feature type="modified residue" description="Phosphoserine" evidence="32">
    <location>
        <position position="660"/>
    </location>
</feature>
<feature type="modified residue" description="Phosphoserine" evidence="32">
    <location>
        <position position="781"/>
    </location>
</feature>
<feature type="sequence variant" id="VAR_079842" description="Decreases double-stranded DNA break-initiated homologous recombination; dbSNP:rs138789658." evidence="26">
    <original>K</original>
    <variation>R</variation>
    <location>
        <position position="18"/>
    </location>
</feature>
<feature type="sequence variant" id="VAR_079843" description="Abrogates the interaction with BRCA1; decreases double-stranded DNA break-initiated homologous recombination; reduces PALB2 and RAD51 localization to ionizing radiation-induced foci; may weaken homooligomerization; dbSNP:rs515726129." evidence="26">
    <original>Y</original>
    <variation>C</variation>
    <location>
        <position position="28"/>
    </location>
</feature>
<feature type="sequence variant" id="VAR_079844" description="Found in breast cancer patients; uncertain significance; abrogates the interaction with BRCA1; abrogates double-stranded DNA break-initiated homologous recombination; abrogates PALB2 and RAD51 localization to ionizing radiation-induced foci; may weaken homooligomerization; dbSNP:rs141047069." evidence="26">
    <original>L</original>
    <variation>P</variation>
    <location>
        <position position="35"/>
    </location>
</feature>
<feature type="sequence variant" id="VAR_079845" description="Decreases double-stranded DNA break-initiated homologous recombination; dbSNP:rs202194596." evidence="26">
    <original>R</original>
    <variation>H</variation>
    <location>
        <position position="37"/>
    </location>
</feature>
<feature type="sequence variant" id="VAR_066361" description="In dbSNP:rs2142457282." evidence="17">
    <original>H</original>
    <variation>Y</variation>
    <location>
        <position position="46"/>
    </location>
</feature>
<feature type="sequence variant" id="VAR_066362" description="In dbSNP:rs45594034." evidence="17">
    <original>D</original>
    <variation>G</variation>
    <location>
        <position position="219"/>
    </location>
</feature>
<feature type="sequence variant" id="VAR_032959" description="In dbSNP:rs3809683.">
    <original>I</original>
    <variation>V</variation>
    <location>
        <position position="309"/>
    </location>
</feature>
<feature type="sequence variant" id="VAR_066363" description="In dbSNP:rs200620434." evidence="17">
    <original>Y</original>
    <variation>C</variation>
    <location>
        <position position="334"/>
    </location>
</feature>
<feature type="sequence variant" id="VAR_066364" description="In dbSNP:rs45494092." evidence="17">
    <original>L</original>
    <variation>S</variation>
    <location>
        <position position="337"/>
    </location>
</feature>
<feature type="sequence variant" id="VAR_088781" description="Risk factor for BROVCA5." evidence="24 27">
    <location>
        <begin position="343"/>
        <end position="1186"/>
    </location>
</feature>
<feature type="sequence variant" id="VAR_066365" description="In dbSNP:rs749461008." evidence="17">
    <original>R</original>
    <variation>Q</variation>
    <location>
        <position position="414"/>
    </location>
</feature>
<feature type="sequence variant" id="VAR_066366" description="In dbSNP:rs576081828." evidence="17">
    <original>V</original>
    <variation>M</variation>
    <location>
        <position position="425"/>
    </location>
</feature>
<feature type="sequence variant" id="VAR_066367" description="In dbSNP:rs577969558." evidence="17">
    <original>A</original>
    <variation>T</variation>
    <location>
        <position position="491"/>
    </location>
</feature>
<feature type="sequence variant" id="VAR_066368" description="In dbSNP:rs515726072." evidence="17">
    <original>K</original>
    <variation>R</variation>
    <location>
        <position position="515"/>
    </location>
</feature>
<feature type="sequence variant" id="VAR_088782" description="In FANCN; risk factor for BROVCA5." evidence="6 27">
    <location>
        <begin position="551"/>
        <end position="1186"/>
    </location>
</feature>
<feature type="sequence variant" id="VAR_066369" description="In dbSNP:rs152451." evidence="17">
    <original>Q</original>
    <variation>R</variation>
    <location>
        <position position="559"/>
    </location>
</feature>
<feature type="sequence variant" id="VAR_066370" description="In dbSNP:rs45532440." evidence="17">
    <original>E</original>
    <variation>Q</variation>
    <location>
        <position position="672"/>
    </location>
</feature>
<feature type="sequence variant" id="VAR_066371" description="In dbSNP:rs141458731." evidence="17">
    <original>A</original>
    <variation>V</variation>
    <location>
        <position position="712"/>
    </location>
</feature>
<feature type="sequence variant" id="VAR_066372" description="In dbSNP:rs2142378919." evidence="17">
    <original>F</original>
    <variation>L</variation>
    <location>
        <position position="728"/>
    </location>
</feature>
<feature type="sequence variant" id="VAR_088783" description="Risk factor for BROVCA5." evidence="8 27">
    <location>
        <begin position="775"/>
        <end position="1186"/>
    </location>
</feature>
<feature type="sequence variant" id="VAR_054150" description="In dbSNP:rs45568339." evidence="9 17">
    <original>P</original>
    <variation>S</variation>
    <location>
        <position position="864"/>
    </location>
</feature>
<feature type="sequence variant" id="VAR_066373" description="In dbSNP:rs763645981." evidence="17">
    <original>V</original>
    <variation>A</variation>
    <location>
        <position position="917"/>
    </location>
</feature>
<feature type="sequence variant" id="VAR_066374" description="In dbSNP:rs45624036." evidence="17">
    <original>V</original>
    <variation>M</variation>
    <location>
        <position position="932"/>
    </location>
</feature>
<feature type="sequence variant" id="VAR_066375" description="May be associated with breast cancer susceptibility; reduces interaction with BRCA2, RAD51 and XRCC3; decreases double-stranded DNA break-initiated homologous recombination; increases sensitivity to IR; dbSNP:rs45478192." evidence="17 22">
    <original>L</original>
    <variation>W</variation>
    <location>
        <position position="939"/>
    </location>
</feature>
<feature type="sequence variant" id="VAR_066376" description="In dbSNP:rs786204248." evidence="17">
    <original>I</original>
    <variation>V</variation>
    <location>
        <position position="966"/>
    </location>
</feature>
<feature type="sequence variant" id="VAR_088784" description="In FANCN; risk factor for BROVCA5." evidence="5 27">
    <location>
        <begin position="988"/>
        <end position="1186"/>
    </location>
</feature>
<feature type="sequence variant" id="VAR_066377" description="In dbSNP:rs45551636." evidence="17">
    <original>G</original>
    <variation>E</variation>
    <location>
        <position position="998"/>
    </location>
</feature>
<feature type="sequence variant" id="VAR_066378" description="In dbSNP:rs746872839." evidence="17">
    <original>A</original>
    <variation>T</variation>
    <location>
        <position position="1025"/>
    </location>
</feature>
<feature type="sequence variant" id="VAR_088785" description="Risk factor for BROVCA5." evidence="4 21 27">
    <location>
        <begin position="1038"/>
        <end position="1186"/>
    </location>
</feature>
<feature type="sequence variant" id="VAR_066379" description="May be associated with breast cancer susceptibility; reduces interaction with BRCA2, RAD51C, RAD51 and XRCC3; decreases double-stranded DNA break-initiated homologous recombination; increases sensitivity to IR; dbSNP:rs377713277." evidence="17">
    <original>G</original>
    <variation>A</variation>
    <location>
        <position position="1043"/>
    </location>
</feature>
<feature type="sequence variant" id="VAR_066380" description="In dbSNP:rs2142274053." evidence="17">
    <original>S</original>
    <variation>G</variation>
    <location>
        <position position="1075"/>
    </location>
</feature>
<feature type="sequence variant" id="VAR_088786" description="Risk factor for BROVCA5; risk factor for PNCA3." evidence="10 27">
    <location>
        <begin position="1086"/>
        <end position="1186"/>
    </location>
</feature>
<feature type="sequence variant" id="VAR_066381" description="In dbSNP:rs2142271779." evidence="17">
    <original>V</original>
    <variation>A</variation>
    <location>
        <position position="1105"/>
    </location>
</feature>
<feature type="sequence variant" id="VAR_066382" description="In dbSNP:rs1567206753." evidence="17">
    <original>Q</original>
    <variation>H</variation>
    <location>
        <position position="1114"/>
    </location>
</feature>
<feature type="sequence variant" id="VAR_066383" description="May be associated with breast cancer susceptibility; dbSNP:rs62625284." evidence="17 22">
    <original>L</original>
    <variation>P</variation>
    <location>
        <position position="1143"/>
    </location>
</feature>
<feature type="sequence variant" id="VAR_066384" description="In dbSNP:rs200283306." evidence="17">
    <original>H</original>
    <variation>Y</variation>
    <location>
        <position position="1170"/>
    </location>
</feature>
<feature type="sequence variant" id="VAR_088787" description="In FANCN; risk factor for BROVCA5." evidence="4 5 27">
    <location>
        <begin position="1183"/>
        <end position="1186"/>
    </location>
</feature>
<feature type="mutagenesis site" description="Loss of interaction with BRCA1 but no effect on interaction with BRCA2." evidence="11">
    <original>K</original>
    <variation>A</variation>
    <location>
        <position position="14"/>
    </location>
</feature>
<feature type="mutagenesis site" description="Loss of interaction with BRCA1 but no effect on interaction with BRCA2." evidence="11">
    <original>L</original>
    <variation>A</variation>
    <location>
        <position position="21"/>
    </location>
</feature>
<feature type="mutagenesis site" description="Loss of interaction with BRCA1 but no effect on interaction with BRCA2." evidence="11">
    <original>Y</original>
    <variation>A</variation>
    <location>
        <position position="28"/>
    </location>
</feature>
<feature type="mutagenesis site" description="Loss of interaction with BRCA1 but no effect on interaction with BRCA2." evidence="11">
    <original>L</original>
    <variation>A</variation>
    <location>
        <position position="35"/>
    </location>
</feature>
<feature type="mutagenesis site" description="Loss of interaction with BRCA1 but no effect on interaction with BRCA2." evidence="11">
    <original>E</original>
    <variation>A</variation>
    <location>
        <position position="42"/>
    </location>
</feature>
<feature type="mutagenesis site" description="Unstable and promotes protein degradation; reduces interaction with RAD51C and RAD51." evidence="22">
    <original>T</original>
    <variation>I</variation>
    <location>
        <position position="1030"/>
    </location>
</feature>
<feature type="helix" evidence="35">
    <location>
        <begin position="600"/>
        <end position="606"/>
    </location>
</feature>
<feature type="helix" evidence="35">
    <location>
        <begin position="616"/>
        <end position="627"/>
    </location>
</feature>
<feature type="strand" evidence="33">
    <location>
        <begin position="855"/>
        <end position="861"/>
    </location>
</feature>
<feature type="strand" evidence="33">
    <location>
        <begin position="869"/>
        <end position="877"/>
    </location>
</feature>
<feature type="strand" evidence="33">
    <location>
        <begin position="884"/>
        <end position="913"/>
    </location>
</feature>
<feature type="strand" evidence="33">
    <location>
        <begin position="919"/>
        <end position="922"/>
    </location>
</feature>
<feature type="strand" evidence="33">
    <location>
        <begin position="932"/>
        <end position="936"/>
    </location>
</feature>
<feature type="strand" evidence="33">
    <location>
        <begin position="938"/>
        <end position="947"/>
    </location>
</feature>
<feature type="strand" evidence="33">
    <location>
        <begin position="958"/>
        <end position="972"/>
    </location>
</feature>
<feature type="turn" evidence="33">
    <location>
        <begin position="973"/>
        <end position="975"/>
    </location>
</feature>
<feature type="strand" evidence="33">
    <location>
        <begin position="976"/>
        <end position="984"/>
    </location>
</feature>
<feature type="strand" evidence="33">
    <location>
        <begin position="988"/>
        <end position="994"/>
    </location>
</feature>
<feature type="strand" evidence="33">
    <location>
        <begin position="1000"/>
        <end position="1006"/>
    </location>
</feature>
<feature type="strand" evidence="33">
    <location>
        <begin position="1013"/>
        <end position="1020"/>
    </location>
</feature>
<feature type="strand" evidence="33">
    <location>
        <begin position="1025"/>
        <end position="1030"/>
    </location>
</feature>
<feature type="strand" evidence="33">
    <location>
        <begin position="1033"/>
        <end position="1039"/>
    </location>
</feature>
<feature type="turn" evidence="33">
    <location>
        <begin position="1040"/>
        <end position="1042"/>
    </location>
</feature>
<feature type="strand" evidence="33">
    <location>
        <begin position="1045"/>
        <end position="1050"/>
    </location>
</feature>
<feature type="strand" evidence="34">
    <location>
        <begin position="1053"/>
        <end position="1055"/>
    </location>
</feature>
<feature type="strand" evidence="33">
    <location>
        <begin position="1059"/>
        <end position="1066"/>
    </location>
</feature>
<feature type="strand" evidence="33">
    <location>
        <begin position="1069"/>
        <end position="1075"/>
    </location>
</feature>
<feature type="strand" evidence="33">
    <location>
        <begin position="1090"/>
        <end position="1096"/>
    </location>
</feature>
<feature type="turn" evidence="33">
    <location>
        <begin position="1097"/>
        <end position="1100"/>
    </location>
</feature>
<feature type="strand" evidence="33">
    <location>
        <begin position="1101"/>
        <end position="1108"/>
    </location>
</feature>
<feature type="strand" evidence="33">
    <location>
        <begin position="1118"/>
        <end position="1124"/>
    </location>
</feature>
<feature type="strand" evidence="33">
    <location>
        <begin position="1127"/>
        <end position="1132"/>
    </location>
</feature>
<feature type="strand" evidence="33">
    <location>
        <begin position="1137"/>
        <end position="1141"/>
    </location>
</feature>
<feature type="turn" evidence="33">
    <location>
        <begin position="1142"/>
        <end position="1144"/>
    </location>
</feature>
<feature type="strand" evidence="33">
    <location>
        <begin position="1146"/>
        <end position="1151"/>
    </location>
</feature>
<feature type="strand" evidence="33">
    <location>
        <begin position="1161"/>
        <end position="1164"/>
    </location>
</feature>
<feature type="strand" evidence="33">
    <location>
        <begin position="1166"/>
        <end position="1174"/>
    </location>
</feature>
<feature type="strand" evidence="33">
    <location>
        <begin position="1180"/>
        <end position="1185"/>
    </location>
</feature>
<reference key="1">
    <citation type="journal article" date="2007" name="BMC Genomics">
        <title>The full-ORF clone resource of the German cDNA consortium.</title>
        <authorList>
            <person name="Bechtel S."/>
            <person name="Rosenfelder H."/>
            <person name="Duda A."/>
            <person name="Schmidt C.P."/>
            <person name="Ernst U."/>
            <person name="Wellenreuther R."/>
            <person name="Mehrle A."/>
            <person name="Schuster C."/>
            <person name="Bahr A."/>
            <person name="Bloecker H."/>
            <person name="Heubner D."/>
            <person name="Hoerlein A."/>
            <person name="Michel G."/>
            <person name="Wedler H."/>
            <person name="Koehrer K."/>
            <person name="Ottenwaelder B."/>
            <person name="Poustka A."/>
            <person name="Wiemann S."/>
            <person name="Schupp I."/>
        </authorList>
    </citation>
    <scope>NUCLEOTIDE SEQUENCE [LARGE SCALE MRNA]</scope>
    <source>
        <tissue>Endometrium</tissue>
    </source>
</reference>
<reference key="2">
    <citation type="journal article" date="2004" name="Nature">
        <title>The sequence and analysis of duplication-rich human chromosome 16.</title>
        <authorList>
            <person name="Martin J."/>
            <person name="Han C."/>
            <person name="Gordon L.A."/>
            <person name="Terry A."/>
            <person name="Prabhakar S."/>
            <person name="She X."/>
            <person name="Xie G."/>
            <person name="Hellsten U."/>
            <person name="Chan Y.M."/>
            <person name="Altherr M."/>
            <person name="Couronne O."/>
            <person name="Aerts A."/>
            <person name="Bajorek E."/>
            <person name="Black S."/>
            <person name="Blumer H."/>
            <person name="Branscomb E."/>
            <person name="Brown N.C."/>
            <person name="Bruno W.J."/>
            <person name="Buckingham J.M."/>
            <person name="Callen D.F."/>
            <person name="Campbell C.S."/>
            <person name="Campbell M.L."/>
            <person name="Campbell E.W."/>
            <person name="Caoile C."/>
            <person name="Challacombe J.F."/>
            <person name="Chasteen L.A."/>
            <person name="Chertkov O."/>
            <person name="Chi H.C."/>
            <person name="Christensen M."/>
            <person name="Clark L.M."/>
            <person name="Cohn J.D."/>
            <person name="Denys M."/>
            <person name="Detter J.C."/>
            <person name="Dickson M."/>
            <person name="Dimitrijevic-Bussod M."/>
            <person name="Escobar J."/>
            <person name="Fawcett J.J."/>
            <person name="Flowers D."/>
            <person name="Fotopulos D."/>
            <person name="Glavina T."/>
            <person name="Gomez M."/>
            <person name="Gonzales E."/>
            <person name="Goodstein D."/>
            <person name="Goodwin L.A."/>
            <person name="Grady D.L."/>
            <person name="Grigoriev I."/>
            <person name="Groza M."/>
            <person name="Hammon N."/>
            <person name="Hawkins T."/>
            <person name="Haydu L."/>
            <person name="Hildebrand C.E."/>
            <person name="Huang W."/>
            <person name="Israni S."/>
            <person name="Jett J."/>
            <person name="Jewett P.B."/>
            <person name="Kadner K."/>
            <person name="Kimball H."/>
            <person name="Kobayashi A."/>
            <person name="Krawczyk M.-C."/>
            <person name="Leyba T."/>
            <person name="Longmire J.L."/>
            <person name="Lopez F."/>
            <person name="Lou Y."/>
            <person name="Lowry S."/>
            <person name="Ludeman T."/>
            <person name="Manohar C.F."/>
            <person name="Mark G.A."/>
            <person name="McMurray K.L."/>
            <person name="Meincke L.J."/>
            <person name="Morgan J."/>
            <person name="Moyzis R.K."/>
            <person name="Mundt M.O."/>
            <person name="Munk A.C."/>
            <person name="Nandkeshwar R.D."/>
            <person name="Pitluck S."/>
            <person name="Pollard M."/>
            <person name="Predki P."/>
            <person name="Parson-Quintana B."/>
            <person name="Ramirez L."/>
            <person name="Rash S."/>
            <person name="Retterer J."/>
            <person name="Ricke D.O."/>
            <person name="Robinson D.L."/>
            <person name="Rodriguez A."/>
            <person name="Salamov A."/>
            <person name="Saunders E.H."/>
            <person name="Scott D."/>
            <person name="Shough T."/>
            <person name="Stallings R.L."/>
            <person name="Stalvey M."/>
            <person name="Sutherland R.D."/>
            <person name="Tapia R."/>
            <person name="Tesmer J.G."/>
            <person name="Thayer N."/>
            <person name="Thompson L.S."/>
            <person name="Tice H."/>
            <person name="Torney D.C."/>
            <person name="Tran-Gyamfi M."/>
            <person name="Tsai M."/>
            <person name="Ulanovsky L.E."/>
            <person name="Ustaszewska A."/>
            <person name="Vo N."/>
            <person name="White P.S."/>
            <person name="Williams A.L."/>
            <person name="Wills P.L."/>
            <person name="Wu J.-R."/>
            <person name="Wu K."/>
            <person name="Yang J."/>
            <person name="DeJong P."/>
            <person name="Bruce D."/>
            <person name="Doggett N.A."/>
            <person name="Deaven L."/>
            <person name="Schmutz J."/>
            <person name="Grimwood J."/>
            <person name="Richardson P."/>
            <person name="Rokhsar D.S."/>
            <person name="Eichler E.E."/>
            <person name="Gilna P."/>
            <person name="Lucas S.M."/>
            <person name="Myers R.M."/>
            <person name="Rubin E.M."/>
            <person name="Pennacchio L.A."/>
        </authorList>
    </citation>
    <scope>NUCLEOTIDE SEQUENCE [LARGE SCALE GENOMIC DNA]</scope>
</reference>
<reference key="3">
    <citation type="submission" date="2005-09" db="EMBL/GenBank/DDBJ databases">
        <authorList>
            <person name="Mural R.J."/>
            <person name="Istrail S."/>
            <person name="Sutton G.G."/>
            <person name="Florea L."/>
            <person name="Halpern A.L."/>
            <person name="Mobarry C.M."/>
            <person name="Lippert R."/>
            <person name="Walenz B."/>
            <person name="Shatkay H."/>
            <person name="Dew I."/>
            <person name="Miller J.R."/>
            <person name="Flanigan M.J."/>
            <person name="Edwards N.J."/>
            <person name="Bolanos R."/>
            <person name="Fasulo D."/>
            <person name="Halldorsson B.V."/>
            <person name="Hannenhalli S."/>
            <person name="Turner R."/>
            <person name="Yooseph S."/>
            <person name="Lu F."/>
            <person name="Nusskern D.R."/>
            <person name="Shue B.C."/>
            <person name="Zheng X.H."/>
            <person name="Zhong F."/>
            <person name="Delcher A.L."/>
            <person name="Huson D.H."/>
            <person name="Kravitz S.A."/>
            <person name="Mouchard L."/>
            <person name="Reinert K."/>
            <person name="Remington K.A."/>
            <person name="Clark A.G."/>
            <person name="Waterman M.S."/>
            <person name="Eichler E.E."/>
            <person name="Adams M.D."/>
            <person name="Hunkapiller M.W."/>
            <person name="Myers E.W."/>
            <person name="Venter J.C."/>
        </authorList>
    </citation>
    <scope>NUCLEOTIDE SEQUENCE [LARGE SCALE GENOMIC DNA]</scope>
</reference>
<reference key="4">
    <citation type="journal article" date="2004" name="Genome Res.">
        <title>The status, quality, and expansion of the NIH full-length cDNA project: the Mammalian Gene Collection (MGC).</title>
        <authorList>
            <consortium name="The MGC Project Team"/>
        </authorList>
    </citation>
    <scope>NUCLEOTIDE SEQUENCE [LARGE SCALE MRNA]</scope>
    <source>
        <tissue>Testis</tissue>
    </source>
</reference>
<reference key="5">
    <citation type="journal article" date="2004" name="Nat. Genet.">
        <title>Complete sequencing and characterization of 21,243 full-length human cDNAs.</title>
        <authorList>
            <person name="Ota T."/>
            <person name="Suzuki Y."/>
            <person name="Nishikawa T."/>
            <person name="Otsuki T."/>
            <person name="Sugiyama T."/>
            <person name="Irie R."/>
            <person name="Wakamatsu A."/>
            <person name="Hayashi K."/>
            <person name="Sato H."/>
            <person name="Nagai K."/>
            <person name="Kimura K."/>
            <person name="Makita H."/>
            <person name="Sekine M."/>
            <person name="Obayashi M."/>
            <person name="Nishi T."/>
            <person name="Shibahara T."/>
            <person name="Tanaka T."/>
            <person name="Ishii S."/>
            <person name="Yamamoto J."/>
            <person name="Saito K."/>
            <person name="Kawai Y."/>
            <person name="Isono Y."/>
            <person name="Nakamura Y."/>
            <person name="Nagahari K."/>
            <person name="Murakami K."/>
            <person name="Yasuda T."/>
            <person name="Iwayanagi T."/>
            <person name="Wagatsuma M."/>
            <person name="Shiratori A."/>
            <person name="Sudo H."/>
            <person name="Hosoiri T."/>
            <person name="Kaku Y."/>
            <person name="Kodaira H."/>
            <person name="Kondo H."/>
            <person name="Sugawara M."/>
            <person name="Takahashi M."/>
            <person name="Kanda K."/>
            <person name="Yokoi T."/>
            <person name="Furuya T."/>
            <person name="Kikkawa E."/>
            <person name="Omura Y."/>
            <person name="Abe K."/>
            <person name="Kamihara K."/>
            <person name="Katsuta N."/>
            <person name="Sato K."/>
            <person name="Tanikawa M."/>
            <person name="Yamazaki M."/>
            <person name="Ninomiya K."/>
            <person name="Ishibashi T."/>
            <person name="Yamashita H."/>
            <person name="Murakawa K."/>
            <person name="Fujimori K."/>
            <person name="Tanai H."/>
            <person name="Kimata M."/>
            <person name="Watanabe M."/>
            <person name="Hiraoka S."/>
            <person name="Chiba Y."/>
            <person name="Ishida S."/>
            <person name="Ono Y."/>
            <person name="Takiguchi S."/>
            <person name="Watanabe S."/>
            <person name="Yosida M."/>
            <person name="Hotuta T."/>
            <person name="Kusano J."/>
            <person name="Kanehori K."/>
            <person name="Takahashi-Fujii A."/>
            <person name="Hara H."/>
            <person name="Tanase T.-O."/>
            <person name="Nomura Y."/>
            <person name="Togiya S."/>
            <person name="Komai F."/>
            <person name="Hara R."/>
            <person name="Takeuchi K."/>
            <person name="Arita M."/>
            <person name="Imose N."/>
            <person name="Musashino K."/>
            <person name="Yuuki H."/>
            <person name="Oshima A."/>
            <person name="Sasaki N."/>
            <person name="Aotsuka S."/>
            <person name="Yoshikawa Y."/>
            <person name="Matsunawa H."/>
            <person name="Ichihara T."/>
            <person name="Shiohata N."/>
            <person name="Sano S."/>
            <person name="Moriya S."/>
            <person name="Momiyama H."/>
            <person name="Satoh N."/>
            <person name="Takami S."/>
            <person name="Terashima Y."/>
            <person name="Suzuki O."/>
            <person name="Nakagawa S."/>
            <person name="Senoh A."/>
            <person name="Mizoguchi H."/>
            <person name="Goto Y."/>
            <person name="Shimizu F."/>
            <person name="Wakebe H."/>
            <person name="Hishigaki H."/>
            <person name="Watanabe T."/>
            <person name="Sugiyama A."/>
            <person name="Takemoto M."/>
            <person name="Kawakami B."/>
            <person name="Yamazaki M."/>
            <person name="Watanabe K."/>
            <person name="Kumagai A."/>
            <person name="Itakura S."/>
            <person name="Fukuzumi Y."/>
            <person name="Fujimori Y."/>
            <person name="Komiyama M."/>
            <person name="Tashiro H."/>
            <person name="Tanigami A."/>
            <person name="Fujiwara T."/>
            <person name="Ono T."/>
            <person name="Yamada K."/>
            <person name="Fujii Y."/>
            <person name="Ozaki K."/>
            <person name="Hirao M."/>
            <person name="Ohmori Y."/>
            <person name="Kawabata A."/>
            <person name="Hikiji T."/>
            <person name="Kobatake N."/>
            <person name="Inagaki H."/>
            <person name="Ikema Y."/>
            <person name="Okamoto S."/>
            <person name="Okitani R."/>
            <person name="Kawakami T."/>
            <person name="Noguchi S."/>
            <person name="Itoh T."/>
            <person name="Shigeta K."/>
            <person name="Senba T."/>
            <person name="Matsumura K."/>
            <person name="Nakajima Y."/>
            <person name="Mizuno T."/>
            <person name="Morinaga M."/>
            <person name="Sasaki M."/>
            <person name="Togashi T."/>
            <person name="Oyama M."/>
            <person name="Hata H."/>
            <person name="Watanabe M."/>
            <person name="Komatsu T."/>
            <person name="Mizushima-Sugano J."/>
            <person name="Satoh T."/>
            <person name="Shirai Y."/>
            <person name="Takahashi Y."/>
            <person name="Nakagawa K."/>
            <person name="Okumura K."/>
            <person name="Nagase T."/>
            <person name="Nomura N."/>
            <person name="Kikuchi H."/>
            <person name="Masuho Y."/>
            <person name="Yamashita R."/>
            <person name="Nakai K."/>
            <person name="Yada T."/>
            <person name="Nakamura Y."/>
            <person name="Ohara O."/>
            <person name="Isogai T."/>
            <person name="Sugano S."/>
        </authorList>
    </citation>
    <scope>NUCLEOTIDE SEQUENCE [LARGE SCALE MRNA] OF 1-440 AND 476-1186</scope>
    <source>
        <tissue>Testis</tissue>
    </source>
</reference>
<reference key="6">
    <citation type="journal article" date="2006" name="Mol. Cell">
        <title>Control of BRCA2 cellular and clinical functions by a nuclear partner, PALB2.</title>
        <authorList>
            <person name="Xia B."/>
            <person name="Sheng Q."/>
            <person name="Nakanishi K."/>
            <person name="Ohashi A."/>
            <person name="Wu J."/>
            <person name="Christ N."/>
            <person name="Liu X."/>
            <person name="Jasin M."/>
            <person name="Couch F.J."/>
            <person name="Livingston D.M."/>
        </authorList>
    </citation>
    <scope>IDENTIFICATION BY MASS SPECTROMETRY</scope>
    <scope>FUNCTION</scope>
    <scope>SUBCELLULAR LOCATION</scope>
    <scope>INTERACTION WITH BRCA2</scope>
</reference>
<reference key="7">
    <citation type="journal article" date="2007" name="Breast Cancer Res.">
        <title>Identification of a novel truncating PALB2 mutation and analysis of its contribution to early-onset breast cancer in French-Canadian women.</title>
        <authorList>
            <person name="Foulkes W.D."/>
            <person name="Ghadirian P."/>
            <person name="Akbari M.R."/>
            <person name="Hamel N."/>
            <person name="Giroux S."/>
            <person name="Sabbaghian N."/>
            <person name="Darnel A."/>
            <person name="Royer R."/>
            <person name="Poll A."/>
            <person name="Fafard E."/>
            <person name="Robidoux A."/>
            <person name="Martin G."/>
            <person name="Bismar T.A."/>
            <person name="Tischkowitz M."/>
            <person name="Rousseau F."/>
            <person name="Narod S.A."/>
        </authorList>
    </citation>
    <scope>INVOLVEMENT IN BROVCA5</scope>
    <scope>VARIANT BROVCA5 775-GLN--SER-1186 DEL</scope>
</reference>
<reference key="8">
    <citation type="journal article" date="2007" name="Nature">
        <title>A recurrent mutation in PALB2 in Finnish cancer families.</title>
        <authorList>
            <person name="Erkko H."/>
            <person name="Xia B."/>
            <person name="Nikkilae J."/>
            <person name="Schleutker J."/>
            <person name="Syrjaekoski K."/>
            <person name="Mannermaa A."/>
            <person name="Kallioniemi A."/>
            <person name="Pylkaes K."/>
            <person name="Karppinen S.-M."/>
            <person name="Rapakko K."/>
            <person name="Miron A."/>
            <person name="Sheng Q."/>
            <person name="Li G."/>
            <person name="Mattila H."/>
            <person name="Bell D.W."/>
            <person name="Haber D.A."/>
            <person name="Grip M."/>
            <person name="Reiman M."/>
            <person name="Jukkola-Vuorinen A."/>
            <person name="Mustonen A."/>
            <person name="Kere J."/>
            <person name="Aaltonen L.A."/>
            <person name="Kosma V.-M."/>
            <person name="Kataja V."/>
            <person name="Soini Y."/>
            <person name="Drapkin R.I."/>
            <person name="Livingston D.M."/>
            <person name="Winqvist R."/>
        </authorList>
    </citation>
    <scope>INVOLVEMENT IN SUSCEPTIBILITY TO BREAST CANCER</scope>
</reference>
<reference key="9">
    <citation type="journal article" date="2007" name="Nat. Genet.">
        <title>Fanconi anemia is associated with a defect in the BRCA2 partner PALB2.</title>
        <authorList>
            <person name="Xia B."/>
            <person name="Dorsman J.C."/>
            <person name="Ameziane N."/>
            <person name="de Vries Y."/>
            <person name="Rooimans M.A."/>
            <person name="Sheng Q."/>
            <person name="Pals G."/>
            <person name="Errami A."/>
            <person name="Gluckman E."/>
            <person name="Llera J."/>
            <person name="Wang W."/>
            <person name="Livingston D.M."/>
            <person name="Joenje H."/>
            <person name="de Winter J.P."/>
        </authorList>
    </citation>
    <scope>INVOLVEMENT IN FANCN</scope>
    <scope>VARIANT FANCN 551-TYR--SER-1186 DEL</scope>
</reference>
<reference key="10">
    <citation type="journal article" date="2007" name="Science">
        <title>ATM and ATR substrate analysis reveals extensive protein networks responsive to DNA damage.</title>
        <authorList>
            <person name="Matsuoka S."/>
            <person name="Ballif B.A."/>
            <person name="Smogorzewska A."/>
            <person name="McDonald E.R. III"/>
            <person name="Hurov K.E."/>
            <person name="Luo J."/>
            <person name="Bakalarski C.E."/>
            <person name="Zhao Z."/>
            <person name="Solimini N."/>
            <person name="Lerenthal Y."/>
            <person name="Shiloh Y."/>
            <person name="Gygi S.P."/>
            <person name="Elledge S.J."/>
        </authorList>
    </citation>
    <scope>PHOSPHORYLATION [LARGE SCALE ANALYSIS] AT SER-376</scope>
    <scope>IDENTIFICATION BY MASS SPECTROMETRY [LARGE SCALE ANALYSIS]</scope>
    <source>
        <tissue>Embryonic kidney</tissue>
    </source>
</reference>
<reference key="11">
    <citation type="journal article" date="2009" name="Anal. Chem.">
        <title>Lys-N and trypsin cover complementary parts of the phosphoproteome in a refined SCX-based approach.</title>
        <authorList>
            <person name="Gauci S."/>
            <person name="Helbig A.O."/>
            <person name="Slijper M."/>
            <person name="Krijgsveld J."/>
            <person name="Heck A.J."/>
            <person name="Mohammed S."/>
        </authorList>
    </citation>
    <scope>IDENTIFICATION BY MASS SPECTROMETRY [LARGE SCALE ANALYSIS]</scope>
</reference>
<reference key="12">
    <citation type="journal article" date="2009" name="J. Biol. Chem.">
        <title>PALB2 regulates recombinational repair through chromatin association and oligomerization.</title>
        <authorList>
            <person name="Sy S.M."/>
            <person name="Huen M.S."/>
            <person name="Zhu Y."/>
            <person name="Chen J."/>
        </authorList>
    </citation>
    <scope>FUNCTION</scope>
    <scope>SUBUNIT</scope>
    <scope>INTERACTION WITH BRCA2</scope>
</reference>
<reference key="13">
    <citation type="journal article" date="2009" name="Proc. Natl. Acad. Sci. U.S.A.">
        <title>PALB2 is an integral component of the BRCA complex required for homologous recombination repair.</title>
        <authorList>
            <person name="Sy S.M."/>
            <person name="Huen M.S."/>
            <person name="Chen J."/>
        </authorList>
    </citation>
    <scope>FUNCTION</scope>
    <scope>IDENTIFICATION IN A BRCA COMPLEX WITH BRCA1 AND BRCA2</scope>
    <scope>INTERACTION WITH BRCA1</scope>
    <scope>MUTAGENESIS OF LYS-14; LEU-21; TYR-28; LEU-35 AND GLU-42</scope>
</reference>
<reference key="14">
    <citation type="journal article" date="2009" name="Sci. Signal.">
        <title>Quantitative phosphoproteomic analysis of T cell receptor signaling reveals system-wide modulation of protein-protein interactions.</title>
        <authorList>
            <person name="Mayya V."/>
            <person name="Lundgren D.H."/>
            <person name="Hwang S.-I."/>
            <person name="Rezaul K."/>
            <person name="Wu L."/>
            <person name="Eng J.K."/>
            <person name="Rodionov V."/>
            <person name="Han D.K."/>
        </authorList>
    </citation>
    <scope>PHOSPHORYLATION [LARGE SCALE ANALYSIS] AT SER-387</scope>
    <scope>IDENTIFICATION BY MASS SPECTROMETRY [LARGE SCALE ANALYSIS]</scope>
    <source>
        <tissue>Leukemic T-cell</tissue>
    </source>
</reference>
<reference key="15">
    <citation type="journal article" date="2009" name="Science">
        <title>Exomic sequencing identifies PALB2 as a pancreatic cancer susceptibility gene.</title>
        <authorList>
            <person name="Jones S."/>
            <person name="Hruban R.H."/>
            <person name="Kamiyama M."/>
            <person name="Borges M."/>
            <person name="Zhang X."/>
            <person name="Parsons D.W."/>
            <person name="Lin J.C."/>
            <person name="Palmisano E."/>
            <person name="Brune K."/>
            <person name="Jaffee E.M."/>
            <person name="Iacobuzio-Donahue C.A."/>
            <person name="Maitra A."/>
            <person name="Parmigiani G."/>
            <person name="Kern S.E."/>
            <person name="Velculescu V.E."/>
            <person name="Kinzler K.W."/>
            <person name="Vogelstein B."/>
            <person name="Eshleman J.R."/>
            <person name="Goggins M."/>
            <person name="Klein A.P."/>
        </authorList>
    </citation>
    <scope>INVOLVEMENT IN PNCA3</scope>
    <scope>VARIANT PNCA3 1086-ARG--SER-1186 DEL</scope>
</reference>
<reference key="16">
    <citation type="journal article" date="2010" name="J. Cell Sci.">
        <title>MRG15 binds directly to PALB2 and stimulates homology-directed repair of chromosomal breaks.</title>
        <authorList>
            <person name="Hayakawa T."/>
            <person name="Zhang F."/>
            <person name="Hayakawa N."/>
            <person name="Ohtani Y."/>
            <person name="Shinmyozu K."/>
            <person name="Nakayama J."/>
            <person name="Andreassen P.R."/>
        </authorList>
    </citation>
    <scope>INTERACTION WITH MORF4L1</scope>
</reference>
<reference key="17">
    <citation type="journal article" date="2010" name="Nat. Struct. Mol. Biol.">
        <title>Cooperation of breast cancer proteins PALB2 and piccolo BRCA2 in stimulating homologous recombination.</title>
        <authorList>
            <person name="Buisson R."/>
            <person name="Dion-Cote A.M."/>
            <person name="Coulombe Y."/>
            <person name="Launay H."/>
            <person name="Cai H."/>
            <person name="Stasiak A.Z."/>
            <person name="Stasiak A."/>
            <person name="Xia B."/>
            <person name="Masson J.Y."/>
        </authorList>
    </citation>
    <scope>FUNCTION</scope>
    <scope>INTERACTION WITH RAD51</scope>
</reference>
<reference key="18">
    <citation type="journal article" date="2010" name="Nat. Struct. Mol. Biol.">
        <title>Enhancement of RAD51 recombinase activity by the tumor suppressor PALB2.</title>
        <authorList>
            <person name="Dray E."/>
            <person name="Etchin J."/>
            <person name="Wiese C."/>
            <person name="Saro D."/>
            <person name="Williams G.J."/>
            <person name="Hammel M."/>
            <person name="Yu X."/>
            <person name="Galkin V.E."/>
            <person name="Liu D."/>
            <person name="Tsai M.S."/>
            <person name="Sy S.M."/>
            <person name="Schild D."/>
            <person name="Egelman E."/>
            <person name="Chen J."/>
            <person name="Sung P."/>
        </authorList>
    </citation>
    <scope>FUNCTION</scope>
    <scope>INTERACTION WITH RAD51 AND RAD51AP1</scope>
</reference>
<reference key="19">
    <citation type="journal article" date="2010" name="Sci. Signal.">
        <title>Quantitative phosphoproteomics reveals widespread full phosphorylation site occupancy during mitosis.</title>
        <authorList>
            <person name="Olsen J.V."/>
            <person name="Vermeulen M."/>
            <person name="Santamaria A."/>
            <person name="Kumar C."/>
            <person name="Miller M.L."/>
            <person name="Jensen L.J."/>
            <person name="Gnad F."/>
            <person name="Cox J."/>
            <person name="Jensen T.S."/>
            <person name="Nigg E.A."/>
            <person name="Brunak S."/>
            <person name="Mann M."/>
        </authorList>
    </citation>
    <scope>PHOSPHORYLATION [LARGE SCALE ANALYSIS] AT SER-376</scope>
    <scope>IDENTIFICATION BY MASS SPECTROMETRY [LARGE SCALE ANALYSIS]</scope>
    <source>
        <tissue>Cervix carcinoma</tissue>
    </source>
</reference>
<reference key="20">
    <citation type="journal article" date="2011" name="Sci. Signal.">
        <title>System-wide temporal characterization of the proteome and phosphoproteome of human embryonic stem cell differentiation.</title>
        <authorList>
            <person name="Rigbolt K.T."/>
            <person name="Prokhorova T.A."/>
            <person name="Akimov V."/>
            <person name="Henningsen J."/>
            <person name="Johansen P.T."/>
            <person name="Kratchmarova I."/>
            <person name="Kassem M."/>
            <person name="Mann M."/>
            <person name="Olsen J.V."/>
            <person name="Blagoev B."/>
        </authorList>
    </citation>
    <scope>IDENTIFICATION BY MASS SPECTROMETRY [LARGE SCALE ANALYSIS]</scope>
</reference>
<reference key="21">
    <citation type="journal article" date="2012" name="EMBO Rep.">
        <title>ChAM, a novel motif that mediates PALB2 intrinsic chromatin binding and facilitates DNA repair.</title>
        <authorList>
            <person name="Bleuyard J.Y."/>
            <person name="Buisson R."/>
            <person name="Masson J.Y."/>
            <person name="Esashi F."/>
        </authorList>
    </citation>
    <scope>ASSOCIATION WITH CHROMATIN</scope>
    <scope>ASSOCIATION WITH NUCLEOSOMES</scope>
</reference>
<reference key="22">
    <citation type="journal article" date="2012" name="Hum. Mutat.">
        <title>Rare germline mutations in PALB2 and breast cancer risk: a population-based study.</title>
        <authorList>
            <person name="Tischkowitz M."/>
            <person name="Capanu M."/>
            <person name="Sabbaghian N."/>
            <person name="Li L."/>
            <person name="Liang X."/>
            <person name="Vallee M.P."/>
            <person name="Tavtigian S.V."/>
            <person name="Concannon P."/>
            <person name="Foulkes W.D."/>
            <person name="Bernstein L."/>
            <person name="Bernstein J.L."/>
            <person name="Begg C.B."/>
        </authorList>
    </citation>
    <scope>INVOLVEMENT IN SUSCEPTIBILITY TO BREAST CANCER</scope>
</reference>
<reference key="23">
    <citation type="journal article" date="2012" name="Nucleic Acids Res.">
        <title>PALB2 self-interaction controls homologous recombination.</title>
        <authorList>
            <person name="Buisson R."/>
            <person name="Masson J.Y."/>
        </authorList>
    </citation>
    <scope>FUNCTION</scope>
    <scope>SELF-ASSOCIATION</scope>
</reference>
<reference key="24">
    <citation type="journal article" date="2013" name="J. Proteome Res.">
        <title>Toward a comprehensive characterization of a human cancer cell phosphoproteome.</title>
        <authorList>
            <person name="Zhou H."/>
            <person name="Di Palma S."/>
            <person name="Preisinger C."/>
            <person name="Peng M."/>
            <person name="Polat A.N."/>
            <person name="Heck A.J."/>
            <person name="Mohammed S."/>
        </authorList>
    </citation>
    <scope>PHOSPHORYLATION [LARGE SCALE ANALYSIS] AT SER-172; SER-190; SER-285; SER-376; SER-387; SER-454; SER-660 AND SER-781</scope>
    <scope>IDENTIFICATION BY MASS SPECTROMETRY [LARGE SCALE ANALYSIS]</scope>
    <source>
        <tissue>Cervix carcinoma</tissue>
        <tissue>Erythroleukemia</tissue>
    </source>
</reference>
<reference key="25">
    <citation type="journal article" date="2014" name="Oncogene">
        <title>Breast cancer-associated missense mutants of the PALB2 WD40 domain, which directly binds RAD51C, RAD51 and BRCA2, disrupt DNA repair.</title>
        <authorList>
            <person name="Park J.Y."/>
            <person name="Singh T.R."/>
            <person name="Nassar N."/>
            <person name="Zhang F."/>
            <person name="Freund M."/>
            <person name="Hanenberg H."/>
            <person name="Meetei A.R."/>
            <person name="Andreassen P.R."/>
        </authorList>
    </citation>
    <scope>FUNCTION</scope>
    <scope>INTERACTION WITH BRCA2; RAD51C; RAD51 AND XRCC3</scope>
    <scope>MUTAGENESIS OF THR-1030</scope>
    <scope>CHARACTERIZATION OF VARIANTS TRP-939 AND PRO-1143</scope>
</reference>
<reference key="26">
    <citation type="journal article" date="2014" name="Cell Rep.">
        <title>Breast cancer proteins PALB2 and BRCA2 stimulate polymerase eta in recombination-associated DNA synthesis at blocked replication forks.</title>
        <authorList>
            <person name="Buisson R."/>
            <person name="Niraj J."/>
            <person name="Pauty J."/>
            <person name="Maity R."/>
            <person name="Zhao W."/>
            <person name="Coulombe Y."/>
            <person name="Sung P."/>
            <person name="Masson J.Y."/>
        </authorList>
    </citation>
    <scope>FUNCTION</scope>
    <scope>INTERACTION WITH POLH</scope>
</reference>
<reference key="27">
    <citation type="journal article" date="2016" name="Mol. Cell">
        <title>Non-catalytic Roles for XPG with BRCA1 and BRCA2 in Homologous Recombination and Genome Stability.</title>
        <authorList>
            <person name="Trego K.S."/>
            <person name="Groesser T."/>
            <person name="Davalos A.R."/>
            <person name="Parplys A.C."/>
            <person name="Zhao W."/>
            <person name="Nelson M.R."/>
            <person name="Hlaing A."/>
            <person name="Shih B."/>
            <person name="Rydberg B."/>
            <person name="Pluth J.M."/>
            <person name="Tsai M.S."/>
            <person name="Hoeijmakers J.H.J."/>
            <person name="Sung P."/>
            <person name="Wiese C."/>
            <person name="Campisi J."/>
            <person name="Cooper P.K."/>
        </authorList>
    </citation>
    <scope>IDENTIFICATION IN THE HR COMPLEX</scope>
    <scope>INTERACTION WITH ERCC5 AND BRCA2</scope>
    <scope>SUBCELLULAR LOCATION</scope>
</reference>
<reference key="28">
    <citation type="journal article" date="2017" name="Oncogene">
        <title>Compromised BRCA1-PALB2 interaction is associated with breast cancer risk.</title>
        <authorList>
            <person name="Foo T.K."/>
            <person name="Tischkowitz M."/>
            <person name="Simhadri S."/>
            <person name="Boshari T."/>
            <person name="Zayed N."/>
            <person name="Burke K.A."/>
            <person name="Berman S.H."/>
            <person name="Blecua P."/>
            <person name="Riaz N."/>
            <person name="Huo Y."/>
            <person name="Ding Y.C."/>
            <person name="Neuhausen S.L."/>
            <person name="Weigelt B."/>
            <person name="Reis-Filho J.S."/>
            <person name="Foulkes W.D."/>
            <person name="Xia B."/>
        </authorList>
    </citation>
    <scope>FUNCTION</scope>
    <scope>SUBUNIT</scope>
    <scope>INTERACTION WITH BRCA1; BRCA2 AND RAD51</scope>
    <scope>SUBCELLULAR LOCATION</scope>
    <scope>VARIANT PRO-35</scope>
    <scope>CHARACTERIZATION OF VARIANT PRO-35</scope>
    <scope>CHARACTERIZATION OF VARIANTS ARG-18; CYS-28 AND HIS-37</scope>
</reference>
<reference key="29">
    <citation type="journal article" date="2009" name="EMBO Rep.">
        <title>Structural basis for recruitment of BRCA2 by PALB2.</title>
        <authorList>
            <person name="Oliver A.W."/>
            <person name="Swift S."/>
            <person name="Lord C.J."/>
            <person name="Ashworth A."/>
            <person name="Pearl L.H."/>
        </authorList>
    </citation>
    <scope>X-RAY CRYSTALLOGRAPHY (1.9 ANGSTROMS) OF 835-1186 ALONE AND IN COMPLEX WITH A BRCA2 PEPTIDE</scope>
    <scope>DOMAIN WD REPEATS</scope>
</reference>
<reference key="30">
    <citation type="journal article" date="2007" name="Nat. Genet.">
        <title>Biallelic mutations in PALB2 cause Fanconi anemia subtype FA-N and predispose to childhood cancer.</title>
        <authorList>
            <person name="Reid S."/>
            <person name="Schindler D."/>
            <person name="Hanenberg H."/>
            <person name="Barker K."/>
            <person name="Hanks S."/>
            <person name="Kalb R."/>
            <person name="Neveling K."/>
            <person name="Kelly P."/>
            <person name="Seal S."/>
            <person name="Freund M."/>
            <person name="Wurm M."/>
            <person name="Batish S.D."/>
            <person name="Lach F.P."/>
            <person name="Yetgin S."/>
            <person name="Neitzel H."/>
            <person name="Ariffin H."/>
            <person name="Tischkowitz M."/>
            <person name="Mathew C.G."/>
            <person name="Auerbach A.D."/>
            <person name="Rahman N."/>
        </authorList>
    </citation>
    <scope>INVOLVEMENT IN FANCN</scope>
    <scope>VARIANTS FANCN 988-GLN--SER-1186 DEL AND 1183-TYR--SER-1186 DEL</scope>
</reference>
<reference key="31">
    <citation type="journal article" date="2007" name="Nat. Genet.">
        <title>PALB2, which encodes a BRCA2-interacting protein, is a breast cancer susceptibility gene.</title>
        <authorList>
            <consortium name="Breast Cancer Susceptibility Collaboration (UK)"/>
            <person name="Rahman N."/>
            <person name="Seal S."/>
            <person name="Thompson D."/>
            <person name="Kelly P."/>
            <person name="Renwick A."/>
            <person name="Elliott A."/>
            <person name="Reid S."/>
            <person name="Spanova K."/>
            <person name="Barfoot R."/>
            <person name="Chagtai T."/>
            <person name="Jayatilake H."/>
            <person name="McGuffog L."/>
            <person name="Hanks S."/>
            <person name="Evans D.G."/>
            <person name="Eccles D."/>
            <person name="Easton D.F."/>
            <person name="Stratton M.R."/>
        </authorList>
    </citation>
    <scope>VARIANTS BROVCA5 1038-TRP--SER-1186 DEL AND 1183-TYR--SER-1186 DEL</scope>
</reference>
<reference key="32">
    <citation type="journal article" date="2008" name="Nature">
        <title>DNA sequencing of a cytogenetically normal acute myeloid leukaemia genome.</title>
        <authorList>
            <person name="Ley T.J."/>
            <person name="Mardis E.R."/>
            <person name="Ding L."/>
            <person name="Fulton B."/>
            <person name="McLellan M.D."/>
            <person name="Chen K."/>
            <person name="Dooling D."/>
            <person name="Dunford-Shore B.H."/>
            <person name="McGrath S."/>
            <person name="Hickenbotham M."/>
            <person name="Cook L."/>
            <person name="Abbott R."/>
            <person name="Larson D.E."/>
            <person name="Koboldt D.C."/>
            <person name="Pohl C."/>
            <person name="Smith S."/>
            <person name="Hawkins A."/>
            <person name="Abbott S."/>
            <person name="Locke D."/>
            <person name="Hillier L.W."/>
            <person name="Miner T."/>
            <person name="Fulton L."/>
            <person name="Magrini V."/>
            <person name="Wylie T."/>
            <person name="Glasscock J."/>
            <person name="Conyers J."/>
            <person name="Sander N."/>
            <person name="Shi X."/>
            <person name="Osborne J.R."/>
            <person name="Minx P."/>
            <person name="Gordon D."/>
            <person name="Chinwalla A."/>
            <person name="Zhao Y."/>
            <person name="Ries R.E."/>
            <person name="Payton J.E."/>
            <person name="Westervelt P."/>
            <person name="Tomasson M.H."/>
            <person name="Watson M."/>
            <person name="Baty J."/>
            <person name="Ivanovich J."/>
            <person name="Heath S."/>
            <person name="Shannon W.D."/>
            <person name="Nagarajan R."/>
            <person name="Walter M.J."/>
            <person name="Link D.C."/>
            <person name="Graubert T.A."/>
            <person name="DiPersio J.F."/>
            <person name="Wilson R.K."/>
        </authorList>
    </citation>
    <scope>VARIANT [LARGE SCALE ANALYSIS] SER-864</scope>
</reference>
<reference key="33">
    <citation type="journal article" date="2011" name="Hum. Mutat.">
        <title>Germline mutations in the PALB2 gene are population specific and occur with low frequencies in familial breast cancer.</title>
        <authorList>
            <person name="Hellebrand H."/>
            <person name="Sutter C."/>
            <person name="Honisch E."/>
            <person name="Gross E."/>
            <person name="Wappenschmidt B."/>
            <person name="Schem C."/>
            <person name="Deissler H."/>
            <person name="Ditsch N."/>
            <person name="Gress V."/>
            <person name="Kiechle M."/>
            <person name="Bartram C.R."/>
            <person name="Schmutzler R.K."/>
            <person name="Niederacher D."/>
            <person name="Arnold N."/>
            <person name="Meindl A."/>
        </authorList>
    </citation>
    <scope>VARIANTS TYR-46; GLY-219; CYS-334; SER-337; GLN-414; MET-425; THR-491; ARG-515; ARG-559; GLN-672; VAL-712; LEU-728; SER-864; ALA-917; MET-932; TRP-939; VAL-966; GLU-998; THR-1025; ALA-1043; GLY-1075; ALA-1105; HIS-1114; PRO-1143 AND TYR-1170</scope>
</reference>
<reference key="34">
    <citation type="journal article" date="2013" name="Breast Cancer Res.">
        <title>Prevalence of PALB2 mutations in Australasian multiple-case breast cancer families.</title>
        <authorList>
            <person name="Teo Z.L."/>
            <person name="Park D.J."/>
            <person name="Provenzano E."/>
            <person name="Chatfield C.A."/>
            <person name="Odefrey F.A."/>
            <person name="Nguyen-Dumont T."/>
            <person name="Dowty J.G."/>
            <person name="Hopper J.L."/>
            <person name="Winship I."/>
            <person name="Goldgar D.E."/>
            <person name="Southey M.C."/>
        </authorList>
    </citation>
    <scope>VARIANT BROVCA5 1038-TRP--SER-1186 DEL</scope>
</reference>
<reference key="35">
    <citation type="journal article" date="2014" name="Genet. Med.">
        <title>PALB2 sequencing in Italian familial breast cancer cases reveals a high-risk mutation recurrent in the province of Bergamo.</title>
        <authorList>
            <person name="Catucci I."/>
            <person name="Peterlongo P."/>
            <person name="Ciceri S."/>
            <person name="Colombo M."/>
            <person name="Pasquini G."/>
            <person name="Barile M."/>
            <person name="Bonanni B."/>
            <person name="Verderio P."/>
            <person name="Pizzamiglio S."/>
            <person name="Foglia C."/>
            <person name="Falanga A."/>
            <person name="Marchetti M."/>
            <person name="Galastri L."/>
            <person name="Bianchi T."/>
            <person name="Corna C."/>
            <person name="Ravagnani F."/>
            <person name="Bernard L."/>
            <person name="Fortuzzi S."/>
            <person name="Sardella D."/>
            <person name="Scuvera G."/>
            <person name="Peissel B."/>
            <person name="Manoukian S."/>
            <person name="Tondini C."/>
            <person name="Radice P."/>
        </authorList>
    </citation>
    <scope>VARIANT BROVCA5 343-GLN--SER-1186 DEL</scope>
</reference>
<reference key="36">
    <citation type="journal article" date="2020" name="J. Clin. Oncol.">
        <title>Cancer Risks Associated With Germline PALB2 Pathogenic Variants: An International Study of 524 Families.</title>
        <authorList>
            <person name="Yang X."/>
            <person name="Leslie G."/>
            <person name="Doroszuk A."/>
            <person name="Schneider S."/>
            <person name="Allen J."/>
            <person name="Decker B."/>
            <person name="Dunning A.M."/>
            <person name="Redman J."/>
            <person name="Scarth J."/>
            <person name="Plaskocinska I."/>
            <person name="Luccarini C."/>
            <person name="Shah M."/>
            <person name="Pooley K."/>
            <person name="Dorling L."/>
            <person name="Lee A."/>
            <person name="Adank M.A."/>
            <person name="Adlard J."/>
            <person name="Aittomaeki K."/>
            <person name="Andrulis I.L."/>
            <person name="Ang P."/>
            <person name="Barwell J."/>
            <person name="Bernstein J.L."/>
            <person name="Bobolis K."/>
            <person name="Borg A."/>
            <person name="Blomqvist C."/>
            <person name="Claes K.B.M."/>
            <person name="Concannon P."/>
            <person name="Cuggia A."/>
            <person name="Culver J.O."/>
            <person name="Damiola F."/>
            <person name="de Pauw A."/>
            <person name="Diez O."/>
            <person name="Dolinsky J.S."/>
            <person name="Domchek S.M."/>
            <person name="Engel C."/>
            <person name="Evans D.G."/>
            <person name="Fostira F."/>
            <person name="Garber J."/>
            <person name="Golmard L."/>
            <person name="Goode E.L."/>
            <person name="Gruber S.B."/>
            <person name="Hahnen E."/>
            <person name="Hake C."/>
            <person name="Heikkinen T."/>
            <person name="Hurley J.E."/>
            <person name="Janavicius R."/>
            <person name="Kleibl Z."/>
            <person name="Kleiblova P."/>
            <person name="Konstantopoulou I."/>
            <person name="Kvist A."/>
            <person name="Laduca H."/>
            <person name="Lee A.S.G."/>
            <person name="Lesueur F."/>
            <person name="Maher E.R."/>
            <person name="Mannermaa A."/>
            <person name="Manoukian S."/>
            <person name="McFarland R."/>
            <person name="McKinnon W."/>
            <person name="Meindl A."/>
            <person name="Metcalfe K."/>
            <person name="Mohd Taib N.A."/>
            <person name="Moilanen J."/>
            <person name="Nathanson K.L."/>
            <person name="Neuhausen S."/>
            <person name="Ng P.S."/>
            <person name="Nguyen-Dumont T."/>
            <person name="Nielsen S.M."/>
            <person name="Obermair F."/>
            <person name="Offit K."/>
            <person name="Olopade O.I."/>
            <person name="Ottini L."/>
            <person name="Penkert J."/>
            <person name="Pylkaes K."/>
            <person name="Radice P."/>
            <person name="Ramus S.J."/>
            <person name="Rudaitis V."/>
            <person name="Side L."/>
            <person name="Silva-Smith R."/>
            <person name="Silvestri V."/>
            <person name="Skytte A.B."/>
            <person name="Slavin T."/>
            <person name="Soukupova J."/>
            <person name="Tondini C."/>
            <person name="Trainer A.H."/>
            <person name="Unzeitig G."/>
            <person name="Usha L."/>
            <person name="van Overeem Hansen T."/>
            <person name="Whitworth J."/>
            <person name="Wood M."/>
            <person name="Yip C.H."/>
            <person name="Yoon S.Y."/>
            <person name="Yussuf A."/>
            <person name="Zogopoulos G."/>
            <person name="Goldgar D."/>
            <person name="Hopper J.L."/>
            <person name="Chenevix-Trench G."/>
            <person name="Pharoah P."/>
            <person name="George S.H.L."/>
            <person name="Balmana J."/>
            <person name="Houdayer C."/>
            <person name="James P."/>
            <person name="El-Haffaf Z."/>
            <person name="Ehrencrona H."/>
            <person name="Janatova M."/>
            <person name="Peterlongo P."/>
            <person name="Nevanlinna H."/>
            <person name="Schmutzler R."/>
            <person name="Teo S.H."/>
            <person name="Robson M."/>
            <person name="Pal T."/>
            <person name="Couch F."/>
            <person name="Weitzel J.N."/>
            <person name="Elliott A."/>
            <person name="Southey M."/>
            <person name="Winqvist R."/>
            <person name="Easton D.F."/>
            <person name="Foulkes W.D."/>
            <person name="Antoniou A.C."/>
            <person name="Tischkowitz M."/>
        </authorList>
    </citation>
    <scope>VARIANTS BROVCA5 343-GLN--SER-1186 DEL; 551-TYR--SER-1186 DEL; 775-GLN--SER-1186 DEL; 988-GLN--SER-1186 DEL; 1038-TRP--SER-1186 DEL; 1086-ARG--SER-1186 DEL AND 1183-TYR--SER-1186 DEL</scope>
</reference>